<proteinExistence type="evidence at protein level"/>
<reference key="1">
    <citation type="journal article" date="1995" name="J. Cell Biol.">
        <title>Targeting of the yeast plasma membrane [H+]ATPase: a novel gene AST1 prevents mislocalization of mutant ATPase to the vacuole.</title>
        <authorList>
            <person name="Chang A."/>
            <person name="Fink G.R."/>
        </authorList>
    </citation>
    <scope>NUCLEOTIDE SEQUENCE [GENOMIC DNA]</scope>
    <scope>FUNCTION</scope>
    <scope>INTERACTION WITH PMA1</scope>
</reference>
<reference key="2">
    <citation type="journal article" date="1994" name="Yeast">
        <title>The two genes encoding yeast ribosomal protein S8 reside on different chromosomes, and are closely linked to the hsp70 stress protein genes SSA3 and SSA4.</title>
        <authorList>
            <person name="Logghe M."/>
            <person name="Molemans F."/>
            <person name="Fiers W."/>
            <person name="Contreras R."/>
        </authorList>
    </citation>
    <scope>NUCLEOTIDE SEQUENCE [GENOMIC DNA]</scope>
    <source>
        <strain>ATCC 204508 / S288c</strain>
    </source>
</reference>
<reference key="3">
    <citation type="journal article" date="1994" name="EMBO J.">
        <title>Complete DNA sequence of yeast chromosome II.</title>
        <authorList>
            <person name="Feldmann H."/>
            <person name="Aigle M."/>
            <person name="Aljinovic G."/>
            <person name="Andre B."/>
            <person name="Baclet M.C."/>
            <person name="Barthe C."/>
            <person name="Baur A."/>
            <person name="Becam A.-M."/>
            <person name="Biteau N."/>
            <person name="Boles E."/>
            <person name="Brandt T."/>
            <person name="Brendel M."/>
            <person name="Brueckner M."/>
            <person name="Bussereau F."/>
            <person name="Christiansen C."/>
            <person name="Contreras R."/>
            <person name="Crouzet M."/>
            <person name="Cziepluch C."/>
            <person name="Demolis N."/>
            <person name="Delaveau T."/>
            <person name="Doignon F."/>
            <person name="Domdey H."/>
            <person name="Duesterhus S."/>
            <person name="Dubois E."/>
            <person name="Dujon B."/>
            <person name="El Bakkoury M."/>
            <person name="Entian K.-D."/>
            <person name="Feuermann M."/>
            <person name="Fiers W."/>
            <person name="Fobo G.M."/>
            <person name="Fritz C."/>
            <person name="Gassenhuber J."/>
            <person name="Glansdorff N."/>
            <person name="Goffeau A."/>
            <person name="Grivell L.A."/>
            <person name="de Haan M."/>
            <person name="Hein C."/>
            <person name="Herbert C.J."/>
            <person name="Hollenberg C.P."/>
            <person name="Holmstroem K."/>
            <person name="Jacq C."/>
            <person name="Jacquet M."/>
            <person name="Jauniaux J.-C."/>
            <person name="Jonniaux J.-L."/>
            <person name="Kallesoee T."/>
            <person name="Kiesau P."/>
            <person name="Kirchrath L."/>
            <person name="Koetter P."/>
            <person name="Korol S."/>
            <person name="Liebl S."/>
            <person name="Logghe M."/>
            <person name="Lohan A.J.E."/>
            <person name="Louis E.J."/>
            <person name="Li Z.Y."/>
            <person name="Maat M.J."/>
            <person name="Mallet L."/>
            <person name="Mannhaupt G."/>
            <person name="Messenguy F."/>
            <person name="Miosga T."/>
            <person name="Molemans F."/>
            <person name="Mueller S."/>
            <person name="Nasr F."/>
            <person name="Obermaier B."/>
            <person name="Perea J."/>
            <person name="Pierard A."/>
            <person name="Piravandi E."/>
            <person name="Pohl F.M."/>
            <person name="Pohl T.M."/>
            <person name="Potier S."/>
            <person name="Proft M."/>
            <person name="Purnelle B."/>
            <person name="Ramezani Rad M."/>
            <person name="Rieger M."/>
            <person name="Rose M."/>
            <person name="Schaaff-Gerstenschlaeger I."/>
            <person name="Scherens B."/>
            <person name="Schwarzlose C."/>
            <person name="Skala J."/>
            <person name="Slonimski P.P."/>
            <person name="Smits P.H.M."/>
            <person name="Souciet J.-L."/>
            <person name="Steensma H.Y."/>
            <person name="Stucka R."/>
            <person name="Urrestarazu L.A."/>
            <person name="van der Aart Q.J.M."/>
            <person name="Van Dyck L."/>
            <person name="Vassarotti A."/>
            <person name="Vetter I."/>
            <person name="Vierendeels F."/>
            <person name="Vissers S."/>
            <person name="Wagner G."/>
            <person name="de Wergifosse P."/>
            <person name="Wolfe K.H."/>
            <person name="Zagulski M."/>
            <person name="Zimmermann F.K."/>
            <person name="Mewes H.-W."/>
            <person name="Kleine K."/>
        </authorList>
    </citation>
    <scope>NUCLEOTIDE SEQUENCE [LARGE SCALE GENOMIC DNA]</scope>
    <source>
        <strain>ATCC 204508 / S288c</strain>
    </source>
</reference>
<reference key="4">
    <citation type="journal article" date="2014" name="G3 (Bethesda)">
        <title>The reference genome sequence of Saccharomyces cerevisiae: Then and now.</title>
        <authorList>
            <person name="Engel S.R."/>
            <person name="Dietrich F.S."/>
            <person name="Fisk D.G."/>
            <person name="Binkley G."/>
            <person name="Balakrishnan R."/>
            <person name="Costanzo M.C."/>
            <person name="Dwight S.S."/>
            <person name="Hitz B.C."/>
            <person name="Karra K."/>
            <person name="Nash R.S."/>
            <person name="Weng S."/>
            <person name="Wong E.D."/>
            <person name="Lloyd P."/>
            <person name="Skrzypek M.S."/>
            <person name="Miyasato S.R."/>
            <person name="Simison M."/>
            <person name="Cherry J.M."/>
        </authorList>
    </citation>
    <scope>GENOME REANNOTATION</scope>
    <source>
        <strain>ATCC 204508 / S288c</strain>
    </source>
</reference>
<reference key="5">
    <citation type="journal article" date="2001" name="Mol. Biol. Cell">
        <title>Plasma membrane proton ATPase Pma1p requires raft association for surface delivery in yeast.</title>
        <authorList>
            <person name="Bagnat M."/>
            <person name="Chang A."/>
            <person name="Simons K."/>
        </authorList>
    </citation>
    <scope>SUBCELLULAR LOCATION</scope>
    <scope>INTERACTION WITH PMA1</scope>
</reference>
<reference key="6">
    <citation type="journal article" date="2018" name="J. Proteome Res.">
        <title>Enrichment-based proteogenomics identifies microproteins, missing proteins, and novel smORFs in Saccharomyces cerevisiae.</title>
        <authorList>
            <person name="He C."/>
            <person name="Jia C."/>
            <person name="Zhang Y."/>
            <person name="Xu P."/>
        </authorList>
    </citation>
    <scope>IDENTIFICATION BY MASS SPECTROMETRY</scope>
</reference>
<evidence type="ECO:0000269" key="1">
    <source>
    </source>
</evidence>
<evidence type="ECO:0000269" key="2">
    <source>
    </source>
</evidence>
<evidence type="ECO:0000303" key="3">
    <source>
    </source>
</evidence>
<evidence type="ECO:0000305" key="4"/>
<evidence type="ECO:0000305" key="5">
    <source>
    </source>
</evidence>
<evidence type="ECO:0000312" key="6">
    <source>
        <dbReference type="SGD" id="S000000165"/>
    </source>
</evidence>
<name>AST1_YEAST</name>
<feature type="chain" id="PRO_0000064710" description="Protein AST1">
    <location>
        <begin position="1"/>
        <end position="429"/>
    </location>
</feature>
<feature type="sequence conflict" description="In Ref. 2; CAA81522." evidence="4" ref="2">
    <original>TVGDYVANYKEDIFDSWDNPSANARKMFGSIIWSYNYTHYYFDPNAKTASANNDWIEQCGDFLKNGTVKCVVDKVYDWKDHKEAFSYMATQRAQGKLIMNVEKF</original>
    <variation>HCR</variation>
    <location>
        <begin position="326"/>
        <end position="429"/>
    </location>
</feature>
<sequence>MAKDILKNQDPKLQAMIVEHSAPAPKEIPMDAPVLKRVARPLRHVKFIPIKSLIFHTKTGPMDFSYEKKIKTPIPKNKIVVRVSNVGLNPVDMKIRNGYTSSIYGEIGLGREYSGVITEVGENLNYAWHVGDEVYGIYYHPHLAVGCLQSSILVDPKVDPILLRPESVSAEEAAGSLFCLATGYNILNKLSKNKYLKQDSNVLINGGTSSVGMFVIQLLKRHYKLQKKLVIVTSANGPQVLQEKFPDLADEMIFIDYLTCRGKSSKPLRKMLEEKKISQYDPVEDKETILNYNEGKFDVVLDFVGGYDILSHSSSLIHGGGAYVTTVGDYVANYKEDIFDSWDNPSANARKMFGSIIWSYNYTHYYFDPNAKTASANNDWIEQCGDFLKNGTVKCVVDKVYDWKDHKEAFSYMATQRAQGKLIMNVEKF</sequence>
<dbReference type="EMBL" id="X81843">
    <property type="protein sequence ID" value="CAA57435.1"/>
    <property type="molecule type" value="Genomic_DNA"/>
</dbReference>
<dbReference type="EMBL" id="Z26879">
    <property type="protein sequence ID" value="CAA81522.1"/>
    <property type="molecule type" value="Genomic_DNA"/>
</dbReference>
<dbReference type="EMBL" id="Z35831">
    <property type="protein sequence ID" value="CAA84891.1"/>
    <property type="molecule type" value="Genomic_DNA"/>
</dbReference>
<dbReference type="EMBL" id="Z35829">
    <property type="protein sequence ID" value="CAA84889.1"/>
    <property type="molecule type" value="Genomic_DNA"/>
</dbReference>
<dbReference type="EMBL" id="BK006936">
    <property type="protein sequence ID" value="DAA07052.1"/>
    <property type="molecule type" value="Genomic_DNA"/>
</dbReference>
<dbReference type="PIR" id="S45588">
    <property type="entry name" value="S45588"/>
</dbReference>
<dbReference type="RefSeq" id="NP_009484.2">
    <property type="nucleotide sequence ID" value="NM_001178309.1"/>
</dbReference>
<dbReference type="SMR" id="P35183"/>
<dbReference type="BioGRID" id="32631">
    <property type="interactions" value="61"/>
</dbReference>
<dbReference type="FunCoup" id="P35183">
    <property type="interactions" value="90"/>
</dbReference>
<dbReference type="IntAct" id="P35183">
    <property type="interactions" value="2"/>
</dbReference>
<dbReference type="STRING" id="4932.YBL069W"/>
<dbReference type="iPTMnet" id="P35183"/>
<dbReference type="PaxDb" id="4932-YBL069W"/>
<dbReference type="PeptideAtlas" id="P35183"/>
<dbReference type="EnsemblFungi" id="YBL069W_mRNA">
    <property type="protein sequence ID" value="YBL069W"/>
    <property type="gene ID" value="YBL069W"/>
</dbReference>
<dbReference type="GeneID" id="852209"/>
<dbReference type="KEGG" id="sce:YBL069W"/>
<dbReference type="AGR" id="SGD:S000000165"/>
<dbReference type="SGD" id="S000000165">
    <property type="gene designation" value="AST1"/>
</dbReference>
<dbReference type="VEuPathDB" id="FungiDB:YBL069W"/>
<dbReference type="eggNOG" id="KOG1198">
    <property type="taxonomic scope" value="Eukaryota"/>
</dbReference>
<dbReference type="GeneTree" id="ENSGT00940000176396"/>
<dbReference type="HOGENOM" id="CLU_026673_4_0_1"/>
<dbReference type="InParanoid" id="P35183"/>
<dbReference type="OMA" id="RHVKFIP"/>
<dbReference type="OrthoDB" id="201656at2759"/>
<dbReference type="BioCyc" id="YEAST:G3O-28964-MONOMER"/>
<dbReference type="BioGRID-ORCS" id="852209">
    <property type="hits" value="1 hit in 10 CRISPR screens"/>
</dbReference>
<dbReference type="PRO" id="PR:P35183"/>
<dbReference type="Proteomes" id="UP000002311">
    <property type="component" value="Chromosome II"/>
</dbReference>
<dbReference type="RNAct" id="P35183">
    <property type="molecule type" value="protein"/>
</dbReference>
<dbReference type="GO" id="GO:0005794">
    <property type="term" value="C:Golgi apparatus"/>
    <property type="evidence" value="ECO:0000314"/>
    <property type="project" value="SGD"/>
</dbReference>
<dbReference type="GO" id="GO:0000139">
    <property type="term" value="C:Golgi membrane"/>
    <property type="evidence" value="ECO:0007669"/>
    <property type="project" value="UniProtKB-SubCell"/>
</dbReference>
<dbReference type="GO" id="GO:0005770">
    <property type="term" value="C:late endosome"/>
    <property type="evidence" value="ECO:0000314"/>
    <property type="project" value="SGD"/>
</dbReference>
<dbReference type="GO" id="GO:0031902">
    <property type="term" value="C:late endosome membrane"/>
    <property type="evidence" value="ECO:0007669"/>
    <property type="project" value="UniProtKB-SubCell"/>
</dbReference>
<dbReference type="GO" id="GO:0045121">
    <property type="term" value="C:membrane raft"/>
    <property type="evidence" value="ECO:0000314"/>
    <property type="project" value="SGD"/>
</dbReference>
<dbReference type="GO" id="GO:0005886">
    <property type="term" value="C:plasma membrane"/>
    <property type="evidence" value="ECO:0000314"/>
    <property type="project" value="SGD"/>
</dbReference>
<dbReference type="GO" id="GO:0016491">
    <property type="term" value="F:oxidoreductase activity"/>
    <property type="evidence" value="ECO:0007669"/>
    <property type="project" value="InterPro"/>
</dbReference>
<dbReference type="GO" id="GO:0006612">
    <property type="term" value="P:protein targeting to membrane"/>
    <property type="evidence" value="ECO:0000316"/>
    <property type="project" value="SGD"/>
</dbReference>
<dbReference type="GO" id="GO:0032596">
    <property type="term" value="P:protein transport into membrane raft"/>
    <property type="evidence" value="ECO:0000315"/>
    <property type="project" value="SGD"/>
</dbReference>
<dbReference type="CDD" id="cd08247">
    <property type="entry name" value="AST1_like"/>
    <property type="match status" value="1"/>
</dbReference>
<dbReference type="FunFam" id="3.40.50.720:FF:000547">
    <property type="entry name" value="Ast1p"/>
    <property type="match status" value="1"/>
</dbReference>
<dbReference type="FunFam" id="3.90.180.10:FF:000038">
    <property type="entry name" value="Ast1p"/>
    <property type="match status" value="1"/>
</dbReference>
<dbReference type="Gene3D" id="3.90.180.10">
    <property type="entry name" value="Medium-chain alcohol dehydrogenases, catalytic domain"/>
    <property type="match status" value="2"/>
</dbReference>
<dbReference type="Gene3D" id="3.40.50.720">
    <property type="entry name" value="NAD(P)-binding Rossmann-like Domain"/>
    <property type="match status" value="2"/>
</dbReference>
<dbReference type="InterPro" id="IPR013154">
    <property type="entry name" value="ADH-like_N"/>
</dbReference>
<dbReference type="InterPro" id="IPR011032">
    <property type="entry name" value="GroES-like_sf"/>
</dbReference>
<dbReference type="InterPro" id="IPR052585">
    <property type="entry name" value="Lipid_raft_assoc_Zn_ADH"/>
</dbReference>
<dbReference type="InterPro" id="IPR036291">
    <property type="entry name" value="NAD(P)-bd_dom_sf"/>
</dbReference>
<dbReference type="InterPro" id="IPR020843">
    <property type="entry name" value="PKS_ER"/>
</dbReference>
<dbReference type="PANTHER" id="PTHR43482">
    <property type="entry name" value="PROTEIN AST1-RELATED"/>
    <property type="match status" value="1"/>
</dbReference>
<dbReference type="PANTHER" id="PTHR43482:SF1">
    <property type="entry name" value="PROTEIN AST1-RELATED"/>
    <property type="match status" value="1"/>
</dbReference>
<dbReference type="Pfam" id="PF08240">
    <property type="entry name" value="ADH_N"/>
    <property type="match status" value="1"/>
</dbReference>
<dbReference type="Pfam" id="PF13602">
    <property type="entry name" value="ADH_zinc_N_2"/>
    <property type="match status" value="1"/>
</dbReference>
<dbReference type="SMART" id="SM00829">
    <property type="entry name" value="PKS_ER"/>
    <property type="match status" value="1"/>
</dbReference>
<dbReference type="SUPFAM" id="SSF50129">
    <property type="entry name" value="GroES-like"/>
    <property type="match status" value="1"/>
</dbReference>
<dbReference type="SUPFAM" id="SSF51735">
    <property type="entry name" value="NAD(P)-binding Rossmann-fold domains"/>
    <property type="match status" value="1"/>
</dbReference>
<keyword id="KW-1003">Cell membrane</keyword>
<keyword id="KW-0967">Endosome</keyword>
<keyword id="KW-0333">Golgi apparatus</keyword>
<keyword id="KW-0472">Membrane</keyword>
<keyword id="KW-1185">Reference proteome</keyword>
<accession>P35183</accession>
<accession>D6VPT2</accession>
<accession>P89492</accession>
<gene>
    <name evidence="3" type="primary">AST1</name>
    <name evidence="6" type="ordered locus">YBL069W</name>
    <name type="ORF">YBL06.04</name>
    <name type="ORF">YBL0617</name>
</gene>
<organism>
    <name type="scientific">Saccharomyces cerevisiae (strain ATCC 204508 / S288c)</name>
    <name type="common">Baker's yeast</name>
    <dbReference type="NCBI Taxonomy" id="559292"/>
    <lineage>
        <taxon>Eukaryota</taxon>
        <taxon>Fungi</taxon>
        <taxon>Dikarya</taxon>
        <taxon>Ascomycota</taxon>
        <taxon>Saccharomycotina</taxon>
        <taxon>Saccharomycetes</taxon>
        <taxon>Saccharomycetales</taxon>
        <taxon>Saccharomycetaceae</taxon>
        <taxon>Saccharomyces</taxon>
    </lineage>
</organism>
<comment type="function">
    <text evidence="1 2">Lipid raft-associated protein involved in the targeting of PMA1 from Golgi to the plasma membrane (PubMed:11739806, PubMed:7822420). May induce clustering of PMA1, which facilitates partition of PMA1 into lipid rafts after leaving the ER and its transport to the cell surface (PubMed:11739806).</text>
</comment>
<comment type="subunit">
    <text evidence="1 2">Interacts with PMA1.</text>
</comment>
<comment type="subcellular location">
    <subcellularLocation>
        <location evidence="1">Cell membrane</location>
        <topology evidence="5">Peripheral membrane protein</topology>
    </subcellularLocation>
    <subcellularLocation>
        <location evidence="1">Membrane raft</location>
        <topology evidence="5">Peripheral membrane protein</topology>
    </subcellularLocation>
    <subcellularLocation>
        <location evidence="1">Golgi apparatus membrane</location>
        <topology evidence="5">Peripheral membrane protein</topology>
    </subcellularLocation>
    <subcellularLocation>
        <location evidence="1">Late endosome membrane</location>
        <topology evidence="5">Peripheral membrane protein</topology>
    </subcellularLocation>
</comment>
<protein>
    <recommendedName>
        <fullName evidence="4">Protein AST1</fullName>
    </recommendedName>
    <alternativeName>
        <fullName evidence="3">ATPAse stabilizing protein 1</fullName>
    </alternativeName>
</protein>